<protein>
    <recommendedName>
        <fullName evidence="1">Phosphomethylpyrimidine synthase</fullName>
        <ecNumber evidence="1">4.1.99.17</ecNumber>
    </recommendedName>
    <alternativeName>
        <fullName evidence="1">Hydroxymethylpyrimidine phosphate synthase</fullName>
        <shortName evidence="1">HMP-P synthase</shortName>
        <shortName evidence="1">HMP-phosphate synthase</shortName>
        <shortName evidence="1">HMPP synthase</shortName>
    </alternativeName>
    <alternativeName>
        <fullName evidence="1">Thiamine biosynthesis protein ThiC</fullName>
    </alternativeName>
</protein>
<sequence>MRTDWVAKRKNDPIRTQMHYARKGIITEEMHYIAKRESISPELIRSEVARGRMIIPANVNHANLEPMCIGVASKCKINSNIGNSSVVSDIAGELEKLEYSVKYGADTVMDLSTGGDIPAIRKAIIGASPIPIGTVPIYEALSRVRRVEDLSAQVMLEVIEEQAEQGVDYMTIHAGILVQHIPLTTKRVTGIVSRGGSILAEWMVKNHKQNFLYECFEDICKILQKHDVSFSLGDGLRPGSIADASDAAQFAELKTLGELTQVAWKHDVQTMIEGPGHIPMDQIEMQVIKEKELCFEAPFYTLGPLVTDIAPGYDHITSAIGAAMIGWYGASMLCYVTPKEHLGLPNREDVKAGIIAYKIAAHAADIARHRPGVRDRDDALSRARYRFDWKEQFALSLDPETARSMHDETLPEDGFKDAHFCSMCGPKFCSMNISAKVESFTADDAAAVLSGAAPESLVNIE</sequence>
<keyword id="KW-0004">4Fe-4S</keyword>
<keyword id="KW-0408">Iron</keyword>
<keyword id="KW-0411">Iron-sulfur</keyword>
<keyword id="KW-0456">Lyase</keyword>
<keyword id="KW-0479">Metal-binding</keyword>
<keyword id="KW-0949">S-adenosyl-L-methionine</keyword>
<keyword id="KW-0784">Thiamine biosynthesis</keyword>
<keyword id="KW-0862">Zinc</keyword>
<gene>
    <name evidence="1" type="primary">thiC</name>
    <name type="ordered locus">Acid_1400</name>
</gene>
<reference key="1">
    <citation type="journal article" date="2009" name="Appl. Environ. Microbiol.">
        <title>Three genomes from the phylum Acidobacteria provide insight into the lifestyles of these microorganisms in soils.</title>
        <authorList>
            <person name="Ward N.L."/>
            <person name="Challacombe J.F."/>
            <person name="Janssen P.H."/>
            <person name="Henrissat B."/>
            <person name="Coutinho P.M."/>
            <person name="Wu M."/>
            <person name="Xie G."/>
            <person name="Haft D.H."/>
            <person name="Sait M."/>
            <person name="Badger J."/>
            <person name="Barabote R.D."/>
            <person name="Bradley B."/>
            <person name="Brettin T.S."/>
            <person name="Brinkac L.M."/>
            <person name="Bruce D."/>
            <person name="Creasy T."/>
            <person name="Daugherty S.C."/>
            <person name="Davidsen T.M."/>
            <person name="DeBoy R.T."/>
            <person name="Detter J.C."/>
            <person name="Dodson R.J."/>
            <person name="Durkin A.S."/>
            <person name="Ganapathy A."/>
            <person name="Gwinn-Giglio M."/>
            <person name="Han C.S."/>
            <person name="Khouri H."/>
            <person name="Kiss H."/>
            <person name="Kothari S.P."/>
            <person name="Madupu R."/>
            <person name="Nelson K.E."/>
            <person name="Nelson W.C."/>
            <person name="Paulsen I."/>
            <person name="Penn K."/>
            <person name="Ren Q."/>
            <person name="Rosovitz M.J."/>
            <person name="Selengut J.D."/>
            <person name="Shrivastava S."/>
            <person name="Sullivan S.A."/>
            <person name="Tapia R."/>
            <person name="Thompson L.S."/>
            <person name="Watkins K.L."/>
            <person name="Yang Q."/>
            <person name="Yu C."/>
            <person name="Zafar N."/>
            <person name="Zhou L."/>
            <person name="Kuske C.R."/>
        </authorList>
    </citation>
    <scope>NUCLEOTIDE SEQUENCE [LARGE SCALE GENOMIC DNA]</scope>
    <source>
        <strain>Ellin6076</strain>
    </source>
</reference>
<feature type="chain" id="PRO_1000004805" description="Phosphomethylpyrimidine synthase">
    <location>
        <begin position="1"/>
        <end position="461"/>
    </location>
</feature>
<feature type="binding site" evidence="1">
    <location>
        <position position="80"/>
    </location>
    <ligand>
        <name>substrate</name>
    </ligand>
</feature>
<feature type="binding site" evidence="1">
    <location>
        <position position="109"/>
    </location>
    <ligand>
        <name>substrate</name>
    </ligand>
</feature>
<feature type="binding site" evidence="1">
    <location>
        <position position="138"/>
    </location>
    <ligand>
        <name>substrate</name>
    </ligand>
</feature>
<feature type="binding site" evidence="1">
    <location>
        <position position="173"/>
    </location>
    <ligand>
        <name>substrate</name>
    </ligand>
</feature>
<feature type="binding site" evidence="1">
    <location>
        <begin position="193"/>
        <end position="195"/>
    </location>
    <ligand>
        <name>substrate</name>
    </ligand>
</feature>
<feature type="binding site" evidence="1">
    <location>
        <begin position="234"/>
        <end position="237"/>
    </location>
    <ligand>
        <name>substrate</name>
    </ligand>
</feature>
<feature type="binding site" evidence="1">
    <location>
        <position position="273"/>
    </location>
    <ligand>
        <name>substrate</name>
    </ligand>
</feature>
<feature type="binding site" evidence="1">
    <location>
        <position position="277"/>
    </location>
    <ligand>
        <name>Zn(2+)</name>
        <dbReference type="ChEBI" id="CHEBI:29105"/>
    </ligand>
</feature>
<feature type="binding site" evidence="1">
    <location>
        <position position="300"/>
    </location>
    <ligand>
        <name>substrate</name>
    </ligand>
</feature>
<feature type="binding site" evidence="1">
    <location>
        <position position="341"/>
    </location>
    <ligand>
        <name>Zn(2+)</name>
        <dbReference type="ChEBI" id="CHEBI:29105"/>
    </ligand>
</feature>
<feature type="binding site" evidence="1">
    <location>
        <position position="421"/>
    </location>
    <ligand>
        <name>[4Fe-4S] cluster</name>
        <dbReference type="ChEBI" id="CHEBI:49883"/>
        <note>4Fe-4S-S-AdoMet</note>
    </ligand>
</feature>
<feature type="binding site" evidence="1">
    <location>
        <position position="424"/>
    </location>
    <ligand>
        <name>[4Fe-4S] cluster</name>
        <dbReference type="ChEBI" id="CHEBI:49883"/>
        <note>4Fe-4S-S-AdoMet</note>
    </ligand>
</feature>
<feature type="binding site" evidence="1">
    <location>
        <position position="429"/>
    </location>
    <ligand>
        <name>[4Fe-4S] cluster</name>
        <dbReference type="ChEBI" id="CHEBI:49883"/>
        <note>4Fe-4S-S-AdoMet</note>
    </ligand>
</feature>
<proteinExistence type="inferred from homology"/>
<organism>
    <name type="scientific">Solibacter usitatus (strain Ellin6076)</name>
    <dbReference type="NCBI Taxonomy" id="234267"/>
    <lineage>
        <taxon>Bacteria</taxon>
        <taxon>Pseudomonadati</taxon>
        <taxon>Acidobacteriota</taxon>
        <taxon>Terriglobia</taxon>
        <taxon>Bryobacterales</taxon>
        <taxon>Solibacteraceae</taxon>
        <taxon>Candidatus Solibacter</taxon>
    </lineage>
</organism>
<name>THIC_SOLUE</name>
<evidence type="ECO:0000255" key="1">
    <source>
        <dbReference type="HAMAP-Rule" id="MF_00089"/>
    </source>
</evidence>
<dbReference type="EC" id="4.1.99.17" evidence="1"/>
<dbReference type="EMBL" id="CP000473">
    <property type="protein sequence ID" value="ABJ82393.1"/>
    <property type="molecule type" value="Genomic_DNA"/>
</dbReference>
<dbReference type="SMR" id="Q028Z8"/>
<dbReference type="FunCoup" id="Q028Z8">
    <property type="interactions" value="489"/>
</dbReference>
<dbReference type="STRING" id="234267.Acid_1400"/>
<dbReference type="KEGG" id="sus:Acid_1400"/>
<dbReference type="eggNOG" id="COG0422">
    <property type="taxonomic scope" value="Bacteria"/>
</dbReference>
<dbReference type="HOGENOM" id="CLU_013181_2_1_0"/>
<dbReference type="InParanoid" id="Q028Z8"/>
<dbReference type="OrthoDB" id="9805897at2"/>
<dbReference type="UniPathway" id="UPA00060"/>
<dbReference type="GO" id="GO:0005829">
    <property type="term" value="C:cytosol"/>
    <property type="evidence" value="ECO:0007669"/>
    <property type="project" value="TreeGrafter"/>
</dbReference>
<dbReference type="GO" id="GO:0051539">
    <property type="term" value="F:4 iron, 4 sulfur cluster binding"/>
    <property type="evidence" value="ECO:0007669"/>
    <property type="project" value="UniProtKB-KW"/>
</dbReference>
<dbReference type="GO" id="GO:0016830">
    <property type="term" value="F:carbon-carbon lyase activity"/>
    <property type="evidence" value="ECO:0007669"/>
    <property type="project" value="InterPro"/>
</dbReference>
<dbReference type="GO" id="GO:0008270">
    <property type="term" value="F:zinc ion binding"/>
    <property type="evidence" value="ECO:0007669"/>
    <property type="project" value="UniProtKB-UniRule"/>
</dbReference>
<dbReference type="GO" id="GO:0009228">
    <property type="term" value="P:thiamine biosynthetic process"/>
    <property type="evidence" value="ECO:0007669"/>
    <property type="project" value="UniProtKB-KW"/>
</dbReference>
<dbReference type="GO" id="GO:0009229">
    <property type="term" value="P:thiamine diphosphate biosynthetic process"/>
    <property type="evidence" value="ECO:0007669"/>
    <property type="project" value="UniProtKB-UniRule"/>
</dbReference>
<dbReference type="FunFam" id="3.20.20.540:FF:000001">
    <property type="entry name" value="Phosphomethylpyrimidine synthase"/>
    <property type="match status" value="1"/>
</dbReference>
<dbReference type="Gene3D" id="6.10.250.620">
    <property type="match status" value="1"/>
</dbReference>
<dbReference type="Gene3D" id="3.20.20.540">
    <property type="entry name" value="Radical SAM ThiC family, central domain"/>
    <property type="match status" value="1"/>
</dbReference>
<dbReference type="HAMAP" id="MF_00089">
    <property type="entry name" value="ThiC"/>
    <property type="match status" value="1"/>
</dbReference>
<dbReference type="InterPro" id="IPR037509">
    <property type="entry name" value="ThiC"/>
</dbReference>
<dbReference type="InterPro" id="IPR038521">
    <property type="entry name" value="ThiC/Bza_core_dom"/>
</dbReference>
<dbReference type="InterPro" id="IPR002817">
    <property type="entry name" value="ThiC/BzaA/B"/>
</dbReference>
<dbReference type="NCBIfam" id="NF006763">
    <property type="entry name" value="PRK09284.1"/>
    <property type="match status" value="1"/>
</dbReference>
<dbReference type="NCBIfam" id="NF009895">
    <property type="entry name" value="PRK13352.1"/>
    <property type="match status" value="1"/>
</dbReference>
<dbReference type="NCBIfam" id="TIGR00190">
    <property type="entry name" value="thiC"/>
    <property type="match status" value="1"/>
</dbReference>
<dbReference type="PANTHER" id="PTHR30557:SF1">
    <property type="entry name" value="PHOSPHOMETHYLPYRIMIDINE SYNTHASE, CHLOROPLASTIC"/>
    <property type="match status" value="1"/>
</dbReference>
<dbReference type="PANTHER" id="PTHR30557">
    <property type="entry name" value="THIAMINE BIOSYNTHESIS PROTEIN THIC"/>
    <property type="match status" value="1"/>
</dbReference>
<dbReference type="Pfam" id="PF01964">
    <property type="entry name" value="ThiC_Rad_SAM"/>
    <property type="match status" value="1"/>
</dbReference>
<dbReference type="SFLD" id="SFLDF00407">
    <property type="entry name" value="phosphomethylpyrimidine_syntha"/>
    <property type="match status" value="1"/>
</dbReference>
<dbReference type="SFLD" id="SFLDG01114">
    <property type="entry name" value="phosphomethylpyrimidine_syntha"/>
    <property type="match status" value="1"/>
</dbReference>
<dbReference type="SFLD" id="SFLDS00113">
    <property type="entry name" value="Radical_SAM_Phosphomethylpyrim"/>
    <property type="match status" value="1"/>
</dbReference>
<comment type="function">
    <text evidence="1">Catalyzes the synthesis of the hydroxymethylpyrimidine phosphate (HMP-P) moiety of thiamine from aminoimidazole ribotide (AIR) in a radical S-adenosyl-L-methionine (SAM)-dependent reaction.</text>
</comment>
<comment type="catalytic activity">
    <reaction evidence="1">
        <text>5-amino-1-(5-phospho-beta-D-ribosyl)imidazole + S-adenosyl-L-methionine = 4-amino-2-methyl-5-(phosphooxymethyl)pyrimidine + CO + 5'-deoxyadenosine + formate + L-methionine + 3 H(+)</text>
        <dbReference type="Rhea" id="RHEA:24840"/>
        <dbReference type="ChEBI" id="CHEBI:15378"/>
        <dbReference type="ChEBI" id="CHEBI:15740"/>
        <dbReference type="ChEBI" id="CHEBI:17245"/>
        <dbReference type="ChEBI" id="CHEBI:17319"/>
        <dbReference type="ChEBI" id="CHEBI:57844"/>
        <dbReference type="ChEBI" id="CHEBI:58354"/>
        <dbReference type="ChEBI" id="CHEBI:59789"/>
        <dbReference type="ChEBI" id="CHEBI:137981"/>
        <dbReference type="EC" id="4.1.99.17"/>
    </reaction>
</comment>
<comment type="cofactor">
    <cofactor evidence="1">
        <name>[4Fe-4S] cluster</name>
        <dbReference type="ChEBI" id="CHEBI:49883"/>
    </cofactor>
    <text evidence="1">Binds 1 [4Fe-4S] cluster per subunit. The cluster is coordinated with 3 cysteines and an exchangeable S-adenosyl-L-methionine.</text>
</comment>
<comment type="pathway">
    <text evidence="1">Cofactor biosynthesis; thiamine diphosphate biosynthesis.</text>
</comment>
<comment type="similarity">
    <text evidence="1">Belongs to the ThiC family.</text>
</comment>
<accession>Q028Z8</accession>